<keyword id="KW-0143">Chaperone</keyword>
<keyword id="KW-0963">Cytoplasm</keyword>
<keyword id="KW-0996">Nickel insertion</keyword>
<proteinExistence type="inferred from homology"/>
<dbReference type="EMBL" id="CP000458">
    <property type="protein sequence ID" value="ABK07651.1"/>
    <property type="molecule type" value="Genomic_DNA"/>
</dbReference>
<dbReference type="RefSeq" id="WP_011544770.1">
    <property type="nucleotide sequence ID" value="NC_008542.1"/>
</dbReference>
<dbReference type="SMR" id="A0K574"/>
<dbReference type="KEGG" id="bch:Bcen2424_0898"/>
<dbReference type="HOGENOM" id="CLU_049215_2_1_4"/>
<dbReference type="GO" id="GO:0005737">
    <property type="term" value="C:cytoplasm"/>
    <property type="evidence" value="ECO:0007669"/>
    <property type="project" value="UniProtKB-SubCell"/>
</dbReference>
<dbReference type="GO" id="GO:0016151">
    <property type="term" value="F:nickel cation binding"/>
    <property type="evidence" value="ECO:0007669"/>
    <property type="project" value="UniProtKB-UniRule"/>
</dbReference>
<dbReference type="Gene3D" id="1.10.4190.10">
    <property type="entry name" value="Urease accessory protein UreF"/>
    <property type="match status" value="1"/>
</dbReference>
<dbReference type="HAMAP" id="MF_01385">
    <property type="entry name" value="UreF"/>
    <property type="match status" value="1"/>
</dbReference>
<dbReference type="InterPro" id="IPR002639">
    <property type="entry name" value="UreF"/>
</dbReference>
<dbReference type="InterPro" id="IPR038277">
    <property type="entry name" value="UreF_sf"/>
</dbReference>
<dbReference type="PANTHER" id="PTHR33620">
    <property type="entry name" value="UREASE ACCESSORY PROTEIN F"/>
    <property type="match status" value="1"/>
</dbReference>
<dbReference type="PANTHER" id="PTHR33620:SF1">
    <property type="entry name" value="UREASE ACCESSORY PROTEIN F"/>
    <property type="match status" value="1"/>
</dbReference>
<dbReference type="Pfam" id="PF01730">
    <property type="entry name" value="UreF"/>
    <property type="match status" value="1"/>
</dbReference>
<dbReference type="PIRSF" id="PIRSF009467">
    <property type="entry name" value="Ureas_acces_UreF"/>
    <property type="match status" value="1"/>
</dbReference>
<protein>
    <recommendedName>
        <fullName evidence="1">Urease accessory protein UreF</fullName>
    </recommendedName>
</protein>
<reference key="1">
    <citation type="submission" date="2006-08" db="EMBL/GenBank/DDBJ databases">
        <title>Complete sequence of chromosome 1 of Burkholderia cenocepacia HI2424.</title>
        <authorList>
            <person name="Copeland A."/>
            <person name="Lucas S."/>
            <person name="Lapidus A."/>
            <person name="Barry K."/>
            <person name="Detter J.C."/>
            <person name="Glavina del Rio T."/>
            <person name="Hammon N."/>
            <person name="Israni S."/>
            <person name="Pitluck S."/>
            <person name="Chain P."/>
            <person name="Malfatti S."/>
            <person name="Shin M."/>
            <person name="Vergez L."/>
            <person name="Schmutz J."/>
            <person name="Larimer F."/>
            <person name="Land M."/>
            <person name="Hauser L."/>
            <person name="Kyrpides N."/>
            <person name="Kim E."/>
            <person name="LiPuma J.J."/>
            <person name="Gonzalez C.F."/>
            <person name="Konstantinidis K."/>
            <person name="Tiedje J.M."/>
            <person name="Richardson P."/>
        </authorList>
    </citation>
    <scope>NUCLEOTIDE SEQUENCE [LARGE SCALE GENOMIC DNA]</scope>
    <source>
        <strain>HI2424</strain>
    </source>
</reference>
<name>UREF_BURCH</name>
<sequence>MTTTELVALLHLASPALPIGAYSYSQGLEAALDANLIRDADSARDWIASGLTDVLAHGELPFLAHQLARWQTHDTHALAAENAWFVASRESAELRRETEQMGWSLAQLCASLEWGDAARRATLASLSPIALPTAFAYAAAAHDAGADATLAAYAFGWVENQTSAALKAVPLGQLAGQRIIVALRGAIDAAVRRALATPPDAVNTFAPQLGILSARHETQYSRLFRS</sequence>
<accession>A0K574</accession>
<feature type="chain" id="PRO_0000344099" description="Urease accessory protein UreF">
    <location>
        <begin position="1"/>
        <end position="226"/>
    </location>
</feature>
<gene>
    <name evidence="1" type="primary">ureF</name>
    <name type="ordered locus">Bcen2424_0898</name>
</gene>
<evidence type="ECO:0000255" key="1">
    <source>
        <dbReference type="HAMAP-Rule" id="MF_01385"/>
    </source>
</evidence>
<comment type="function">
    <text evidence="1">Required for maturation of urease via the functional incorporation of the urease nickel metallocenter.</text>
</comment>
<comment type="subunit">
    <text evidence="1">UreD, UreF and UreG form a complex that acts as a GTP-hydrolysis-dependent molecular chaperone, activating the urease apoprotein by helping to assemble the nickel containing metallocenter of UreC. The UreE protein probably delivers the nickel.</text>
</comment>
<comment type="subcellular location">
    <subcellularLocation>
        <location evidence="1">Cytoplasm</location>
    </subcellularLocation>
</comment>
<comment type="similarity">
    <text evidence="1">Belongs to the UreF family.</text>
</comment>
<organism>
    <name type="scientific">Burkholderia cenocepacia (strain HI2424)</name>
    <dbReference type="NCBI Taxonomy" id="331272"/>
    <lineage>
        <taxon>Bacteria</taxon>
        <taxon>Pseudomonadati</taxon>
        <taxon>Pseudomonadota</taxon>
        <taxon>Betaproteobacteria</taxon>
        <taxon>Burkholderiales</taxon>
        <taxon>Burkholderiaceae</taxon>
        <taxon>Burkholderia</taxon>
        <taxon>Burkholderia cepacia complex</taxon>
    </lineage>
</organism>